<reference key="1">
    <citation type="journal article" date="2005" name="Science">
        <title>The transcriptional landscape of the mammalian genome.</title>
        <authorList>
            <person name="Carninci P."/>
            <person name="Kasukawa T."/>
            <person name="Katayama S."/>
            <person name="Gough J."/>
            <person name="Frith M.C."/>
            <person name="Maeda N."/>
            <person name="Oyama R."/>
            <person name="Ravasi T."/>
            <person name="Lenhard B."/>
            <person name="Wells C."/>
            <person name="Kodzius R."/>
            <person name="Shimokawa K."/>
            <person name="Bajic V.B."/>
            <person name="Brenner S.E."/>
            <person name="Batalov S."/>
            <person name="Forrest A.R."/>
            <person name="Zavolan M."/>
            <person name="Davis M.J."/>
            <person name="Wilming L.G."/>
            <person name="Aidinis V."/>
            <person name="Allen J.E."/>
            <person name="Ambesi-Impiombato A."/>
            <person name="Apweiler R."/>
            <person name="Aturaliya R.N."/>
            <person name="Bailey T.L."/>
            <person name="Bansal M."/>
            <person name="Baxter L."/>
            <person name="Beisel K.W."/>
            <person name="Bersano T."/>
            <person name="Bono H."/>
            <person name="Chalk A.M."/>
            <person name="Chiu K.P."/>
            <person name="Choudhary V."/>
            <person name="Christoffels A."/>
            <person name="Clutterbuck D.R."/>
            <person name="Crowe M.L."/>
            <person name="Dalla E."/>
            <person name="Dalrymple B.P."/>
            <person name="de Bono B."/>
            <person name="Della Gatta G."/>
            <person name="di Bernardo D."/>
            <person name="Down T."/>
            <person name="Engstrom P."/>
            <person name="Fagiolini M."/>
            <person name="Faulkner G."/>
            <person name="Fletcher C.F."/>
            <person name="Fukushima T."/>
            <person name="Furuno M."/>
            <person name="Futaki S."/>
            <person name="Gariboldi M."/>
            <person name="Georgii-Hemming P."/>
            <person name="Gingeras T.R."/>
            <person name="Gojobori T."/>
            <person name="Green R.E."/>
            <person name="Gustincich S."/>
            <person name="Harbers M."/>
            <person name="Hayashi Y."/>
            <person name="Hensch T.K."/>
            <person name="Hirokawa N."/>
            <person name="Hill D."/>
            <person name="Huminiecki L."/>
            <person name="Iacono M."/>
            <person name="Ikeo K."/>
            <person name="Iwama A."/>
            <person name="Ishikawa T."/>
            <person name="Jakt M."/>
            <person name="Kanapin A."/>
            <person name="Katoh M."/>
            <person name="Kawasawa Y."/>
            <person name="Kelso J."/>
            <person name="Kitamura H."/>
            <person name="Kitano H."/>
            <person name="Kollias G."/>
            <person name="Krishnan S.P."/>
            <person name="Kruger A."/>
            <person name="Kummerfeld S.K."/>
            <person name="Kurochkin I.V."/>
            <person name="Lareau L.F."/>
            <person name="Lazarevic D."/>
            <person name="Lipovich L."/>
            <person name="Liu J."/>
            <person name="Liuni S."/>
            <person name="McWilliam S."/>
            <person name="Madan Babu M."/>
            <person name="Madera M."/>
            <person name="Marchionni L."/>
            <person name="Matsuda H."/>
            <person name="Matsuzawa S."/>
            <person name="Miki H."/>
            <person name="Mignone F."/>
            <person name="Miyake S."/>
            <person name="Morris K."/>
            <person name="Mottagui-Tabar S."/>
            <person name="Mulder N."/>
            <person name="Nakano N."/>
            <person name="Nakauchi H."/>
            <person name="Ng P."/>
            <person name="Nilsson R."/>
            <person name="Nishiguchi S."/>
            <person name="Nishikawa S."/>
            <person name="Nori F."/>
            <person name="Ohara O."/>
            <person name="Okazaki Y."/>
            <person name="Orlando V."/>
            <person name="Pang K.C."/>
            <person name="Pavan W.J."/>
            <person name="Pavesi G."/>
            <person name="Pesole G."/>
            <person name="Petrovsky N."/>
            <person name="Piazza S."/>
            <person name="Reed J."/>
            <person name="Reid J.F."/>
            <person name="Ring B.Z."/>
            <person name="Ringwald M."/>
            <person name="Rost B."/>
            <person name="Ruan Y."/>
            <person name="Salzberg S.L."/>
            <person name="Sandelin A."/>
            <person name="Schneider C."/>
            <person name="Schoenbach C."/>
            <person name="Sekiguchi K."/>
            <person name="Semple C.A."/>
            <person name="Seno S."/>
            <person name="Sessa L."/>
            <person name="Sheng Y."/>
            <person name="Shibata Y."/>
            <person name="Shimada H."/>
            <person name="Shimada K."/>
            <person name="Silva D."/>
            <person name="Sinclair B."/>
            <person name="Sperling S."/>
            <person name="Stupka E."/>
            <person name="Sugiura K."/>
            <person name="Sultana R."/>
            <person name="Takenaka Y."/>
            <person name="Taki K."/>
            <person name="Tammoja K."/>
            <person name="Tan S.L."/>
            <person name="Tang S."/>
            <person name="Taylor M.S."/>
            <person name="Tegner J."/>
            <person name="Teichmann S.A."/>
            <person name="Ueda H.R."/>
            <person name="van Nimwegen E."/>
            <person name="Verardo R."/>
            <person name="Wei C.L."/>
            <person name="Yagi K."/>
            <person name="Yamanishi H."/>
            <person name="Zabarovsky E."/>
            <person name="Zhu S."/>
            <person name="Zimmer A."/>
            <person name="Hide W."/>
            <person name="Bult C."/>
            <person name="Grimmond S.M."/>
            <person name="Teasdale R.D."/>
            <person name="Liu E.T."/>
            <person name="Brusic V."/>
            <person name="Quackenbush J."/>
            <person name="Wahlestedt C."/>
            <person name="Mattick J.S."/>
            <person name="Hume D.A."/>
            <person name="Kai C."/>
            <person name="Sasaki D."/>
            <person name="Tomaru Y."/>
            <person name="Fukuda S."/>
            <person name="Kanamori-Katayama M."/>
            <person name="Suzuki M."/>
            <person name="Aoki J."/>
            <person name="Arakawa T."/>
            <person name="Iida J."/>
            <person name="Imamura K."/>
            <person name="Itoh M."/>
            <person name="Kato T."/>
            <person name="Kawaji H."/>
            <person name="Kawagashira N."/>
            <person name="Kawashima T."/>
            <person name="Kojima M."/>
            <person name="Kondo S."/>
            <person name="Konno H."/>
            <person name="Nakano K."/>
            <person name="Ninomiya N."/>
            <person name="Nishio T."/>
            <person name="Okada M."/>
            <person name="Plessy C."/>
            <person name="Shibata K."/>
            <person name="Shiraki T."/>
            <person name="Suzuki S."/>
            <person name="Tagami M."/>
            <person name="Waki K."/>
            <person name="Watahiki A."/>
            <person name="Okamura-Oho Y."/>
            <person name="Suzuki H."/>
            <person name="Kawai J."/>
            <person name="Hayashizaki Y."/>
        </authorList>
    </citation>
    <scope>NUCLEOTIDE SEQUENCE [LARGE SCALE MRNA]</scope>
    <source>
        <strain>C57BL/6J</strain>
        <strain>NOD</strain>
        <tissue>Muellerian duct</tissue>
        <tissue>Ovary</tissue>
        <tissue>Thymus</tissue>
    </source>
</reference>
<reference key="2">
    <citation type="journal article" date="2004" name="Genome Res.">
        <title>The status, quality, and expansion of the NIH full-length cDNA project: the Mammalian Gene Collection (MGC).</title>
        <authorList>
            <consortium name="The MGC Project Team"/>
        </authorList>
    </citation>
    <scope>NUCLEOTIDE SEQUENCE [LARGE SCALE MRNA]</scope>
    <source>
        <strain>C57BL/6J</strain>
        <tissue>Brain</tissue>
    </source>
</reference>
<reference key="3">
    <citation type="submission" date="2007-07" db="UniProtKB">
        <authorList>
            <person name="Lubec G."/>
            <person name="Yang J.W."/>
            <person name="Zigmond M."/>
        </authorList>
    </citation>
    <scope>PROTEIN SEQUENCE OF 144-155</scope>
    <source>
        <tissue>Brain</tissue>
    </source>
</reference>
<reference key="4">
    <citation type="journal article" date="2010" name="Cell">
        <title>A tissue-specific atlas of mouse protein phosphorylation and expression.</title>
        <authorList>
            <person name="Huttlin E.L."/>
            <person name="Jedrychowski M.P."/>
            <person name="Elias J.E."/>
            <person name="Goswami T."/>
            <person name="Rad R."/>
            <person name="Beausoleil S.A."/>
            <person name="Villen J."/>
            <person name="Haas W."/>
            <person name="Sowa M.E."/>
            <person name="Gygi S.P."/>
        </authorList>
    </citation>
    <scope>IDENTIFICATION BY MASS SPECTROMETRY [LARGE SCALE ANALYSIS]</scope>
    <source>
        <tissue>Brown adipose tissue</tissue>
        <tissue>Lung</tissue>
        <tissue>Spleen</tissue>
        <tissue>Testis</tissue>
    </source>
</reference>
<comment type="function">
    <text evidence="2">Component of the nuclear pore complex, a complex required for the trafficking across the nuclear membrane.</text>
</comment>
<comment type="subunit">
    <text evidence="2">Component of the p62 complex, a complex composed of NUP62, NUP54, and the isoform p58 and isoform p45 of NUP58. Interacts with NUTF2.</text>
</comment>
<comment type="subcellular location">
    <subcellularLocation>
        <location evidence="2">Nucleus</location>
        <location evidence="2">Nuclear pore complex</location>
    </subcellularLocation>
    <subcellularLocation>
        <location evidence="2">Nucleus membrane</location>
        <topology evidence="2">Peripheral membrane protein</topology>
        <orientation evidence="2">Cytoplasmic side</orientation>
    </subcellularLocation>
    <subcellularLocation>
        <location evidence="2">Nucleus membrane</location>
        <topology evidence="2">Peripheral membrane protein</topology>
        <orientation evidence="2">Nucleoplasmic side</orientation>
    </subcellularLocation>
    <text evidence="2">Biased towards cytoplasmic side. Central region of the nuclear pore complex, within the transporter.</text>
</comment>
<comment type="domain">
    <text>Contains FG repeats.</text>
</comment>
<comment type="PTM">
    <text evidence="1">O-glycosylated.</text>
</comment>
<comment type="similarity">
    <text evidence="3">Belongs to the NUP54 family.</text>
</comment>
<sequence length="510" mass="55732">MAFNFGAPSGTSGTSTATAAPAGGFGGFGTTTTTAGSAFSFSAPTNTGSTGLLGGTQNKGFGFGTGFGTTTGTGTGLGTGLGTGLGFGGFNTQQQQQQQQTSLGGLFSQPTQAPAQSTQLINTASALSAPTLLGDERDAILAKWNQLQAFWGTGKGYFNNNIPPVEFTQENPFCRFKAVGYSCMPNNKDEDGLVVLIFNKKETDIRSQQQQLVESLHKVLGGNQTLTVNVEGIKTLPDDQTEVVIYVVERSPNGTSRRVPATTLYAHFEQANIKAQLQQLGVTLSMTRTELSPAQIKQLLQNPPAGVDPIIWEQAKVDNPDSEKLIPVPMVGFKELLRRLKVQDQMTKQHQTRLDIISEDISELQKNQTTTMAKIAQYKRKLMELSHRTLQVLIKQEIQRKSGYAIQADEEQLRVQLDTIQGELNAPTQFKGRLNELMSQIRMQNHFGAVKSEEKYYIDADLLREIKQHLKQQQEGLSHLISIIKDDLEDIKLVEHGLNETIHSRGGVFS</sequence>
<proteinExistence type="evidence at protein level"/>
<evidence type="ECO:0000250" key="1"/>
<evidence type="ECO:0000250" key="2">
    <source>
        <dbReference type="UniProtKB" id="P70582"/>
    </source>
</evidence>
<evidence type="ECO:0000305" key="3"/>
<gene>
    <name type="primary">Nup54</name>
</gene>
<protein>
    <recommendedName>
        <fullName>Nuclear pore complex protein Nup54</fullName>
    </recommendedName>
    <alternativeName>
        <fullName>54 kDa nucleoporin</fullName>
    </alternativeName>
    <alternativeName>
        <fullName>Nucleoporin Nup54</fullName>
    </alternativeName>
</protein>
<name>NUP54_MOUSE</name>
<feature type="chain" id="PRO_0000204875" description="Nuclear pore complex protein Nup54">
    <location>
        <begin position="1"/>
        <end position="510"/>
    </location>
</feature>
<feature type="repeat" description="1">
    <location>
        <begin position="5"/>
        <end position="6"/>
    </location>
</feature>
<feature type="repeat" description="2">
    <location>
        <begin position="25"/>
        <end position="26"/>
    </location>
</feature>
<feature type="repeat" description="3">
    <location>
        <begin position="28"/>
        <end position="29"/>
    </location>
</feature>
<feature type="repeat" description="4">
    <location>
        <begin position="61"/>
        <end position="62"/>
    </location>
</feature>
<feature type="repeat" description="5">
    <location>
        <begin position="63"/>
        <end position="64"/>
    </location>
</feature>
<feature type="repeat" description="6">
    <location>
        <begin position="67"/>
        <end position="68"/>
    </location>
</feature>
<feature type="repeat" description="7">
    <location>
        <begin position="87"/>
        <end position="88"/>
    </location>
</feature>
<feature type="repeat" description="8">
    <location>
        <begin position="447"/>
        <end position="448"/>
    </location>
</feature>
<feature type="region of interest" description="8 X 2 AA repeats of F-G">
    <location>
        <begin position="5"/>
        <end position="448"/>
    </location>
</feature>
<keyword id="KW-0903">Direct protein sequencing</keyword>
<keyword id="KW-0325">Glycoprotein</keyword>
<keyword id="KW-0472">Membrane</keyword>
<keyword id="KW-0509">mRNA transport</keyword>
<keyword id="KW-0906">Nuclear pore complex</keyword>
<keyword id="KW-0539">Nucleus</keyword>
<keyword id="KW-0653">Protein transport</keyword>
<keyword id="KW-1185">Reference proteome</keyword>
<keyword id="KW-0677">Repeat</keyword>
<keyword id="KW-0811">Translocation</keyword>
<keyword id="KW-0813">Transport</keyword>
<organism>
    <name type="scientific">Mus musculus</name>
    <name type="common">Mouse</name>
    <dbReference type="NCBI Taxonomy" id="10090"/>
    <lineage>
        <taxon>Eukaryota</taxon>
        <taxon>Metazoa</taxon>
        <taxon>Chordata</taxon>
        <taxon>Craniata</taxon>
        <taxon>Vertebrata</taxon>
        <taxon>Euteleostomi</taxon>
        <taxon>Mammalia</taxon>
        <taxon>Eutheria</taxon>
        <taxon>Euarchontoglires</taxon>
        <taxon>Glires</taxon>
        <taxon>Rodentia</taxon>
        <taxon>Myomorpha</taxon>
        <taxon>Muroidea</taxon>
        <taxon>Muridae</taxon>
        <taxon>Murinae</taxon>
        <taxon>Mus</taxon>
        <taxon>Mus</taxon>
    </lineage>
</organism>
<accession>Q8BTS4</accession>
<accession>Q3TSI2</accession>
<accession>Q8BU42</accession>
<dbReference type="EMBL" id="AK087827">
    <property type="protein sequence ID" value="BAC40018.1"/>
    <property type="molecule type" value="mRNA"/>
</dbReference>
<dbReference type="EMBL" id="AK088855">
    <property type="protein sequence ID" value="BAC40615.1"/>
    <property type="molecule type" value="mRNA"/>
</dbReference>
<dbReference type="EMBL" id="AK133841">
    <property type="protein sequence ID" value="BAE21878.1"/>
    <property type="molecule type" value="mRNA"/>
</dbReference>
<dbReference type="EMBL" id="AK162037">
    <property type="protein sequence ID" value="BAE36693.1"/>
    <property type="molecule type" value="mRNA"/>
</dbReference>
<dbReference type="EMBL" id="BC068114">
    <property type="protein sequence ID" value="AAH68114.1"/>
    <property type="molecule type" value="mRNA"/>
</dbReference>
<dbReference type="CCDS" id="CCDS19430.1"/>
<dbReference type="RefSeq" id="NP_899248.1">
    <property type="nucleotide sequence ID" value="NM_183392.2"/>
</dbReference>
<dbReference type="SMR" id="Q8BTS4"/>
<dbReference type="BioGRID" id="234608">
    <property type="interactions" value="1"/>
</dbReference>
<dbReference type="ComplexPortal" id="CPX-4474">
    <property type="entry name" value="Nuclear pore complex"/>
</dbReference>
<dbReference type="FunCoup" id="Q8BTS4">
    <property type="interactions" value="3858"/>
</dbReference>
<dbReference type="STRING" id="10090.ENSMUSP00000046540"/>
<dbReference type="GlyGen" id="Q8BTS4">
    <property type="glycosylation" value="2 sites, 1 N-linked glycan (1 site), 1 O-linked glycan (1 site)"/>
</dbReference>
<dbReference type="iPTMnet" id="Q8BTS4"/>
<dbReference type="PhosphoSitePlus" id="Q8BTS4"/>
<dbReference type="SwissPalm" id="Q8BTS4"/>
<dbReference type="REPRODUCTION-2DPAGE" id="Q8BTS4"/>
<dbReference type="PaxDb" id="10090-ENSMUSP00000046540"/>
<dbReference type="PeptideAtlas" id="Q8BTS4"/>
<dbReference type="ProteomicsDB" id="293907"/>
<dbReference type="Pumba" id="Q8BTS4"/>
<dbReference type="Antibodypedia" id="24771">
    <property type="antibodies" value="106 antibodies from 25 providers"/>
</dbReference>
<dbReference type="DNASU" id="269113"/>
<dbReference type="Ensembl" id="ENSMUST00000038514.15">
    <property type="protein sequence ID" value="ENSMUSP00000046540.9"/>
    <property type="gene ID" value="ENSMUSG00000034826.15"/>
</dbReference>
<dbReference type="GeneID" id="269113"/>
<dbReference type="KEGG" id="mmu:269113"/>
<dbReference type="UCSC" id="uc008ydk.1">
    <property type="organism name" value="mouse"/>
</dbReference>
<dbReference type="AGR" id="MGI:1920460"/>
<dbReference type="CTD" id="53371"/>
<dbReference type="MGI" id="MGI:1920460">
    <property type="gene designation" value="Nup54"/>
</dbReference>
<dbReference type="VEuPathDB" id="HostDB:ENSMUSG00000034826"/>
<dbReference type="eggNOG" id="KOG3091">
    <property type="taxonomic scope" value="Eukaryota"/>
</dbReference>
<dbReference type="GeneTree" id="ENSGT00390000013620"/>
<dbReference type="HOGENOM" id="CLU_033371_0_0_1"/>
<dbReference type="InParanoid" id="Q8BTS4"/>
<dbReference type="OMA" id="MMQTRLH"/>
<dbReference type="PhylomeDB" id="Q8BTS4"/>
<dbReference type="TreeFam" id="TF320237"/>
<dbReference type="Reactome" id="R-MMU-159227">
    <property type="pathway name" value="Transport of the SLBP independent Mature mRNA"/>
</dbReference>
<dbReference type="Reactome" id="R-MMU-159230">
    <property type="pathway name" value="Transport of the SLBP Dependant Mature mRNA"/>
</dbReference>
<dbReference type="Reactome" id="R-MMU-159231">
    <property type="pathway name" value="Transport of Mature mRNA Derived from an Intronless Transcript"/>
</dbReference>
<dbReference type="Reactome" id="R-MMU-159236">
    <property type="pathway name" value="Transport of Mature mRNA derived from an Intron-Containing Transcript"/>
</dbReference>
<dbReference type="Reactome" id="R-MMU-170822">
    <property type="pathway name" value="Regulation of Glucokinase by Glucokinase Regulatory Protein"/>
</dbReference>
<dbReference type="Reactome" id="R-MMU-191859">
    <property type="pathway name" value="snRNP Assembly"/>
</dbReference>
<dbReference type="Reactome" id="R-MMU-3108214">
    <property type="pathway name" value="SUMOylation of DNA damage response and repair proteins"/>
</dbReference>
<dbReference type="Reactome" id="R-MMU-3232142">
    <property type="pathway name" value="SUMOylation of ubiquitinylation proteins"/>
</dbReference>
<dbReference type="Reactome" id="R-MMU-3301854">
    <property type="pathway name" value="Nuclear Pore Complex (NPC) Disassembly"/>
</dbReference>
<dbReference type="Reactome" id="R-MMU-3371453">
    <property type="pathway name" value="Regulation of HSF1-mediated heat shock response"/>
</dbReference>
<dbReference type="Reactome" id="R-MMU-4085377">
    <property type="pathway name" value="SUMOylation of SUMOylation proteins"/>
</dbReference>
<dbReference type="Reactome" id="R-MMU-4551638">
    <property type="pathway name" value="SUMOylation of chromatin organization proteins"/>
</dbReference>
<dbReference type="Reactome" id="R-MMU-4570464">
    <property type="pathway name" value="SUMOylation of RNA binding proteins"/>
</dbReference>
<dbReference type="Reactome" id="R-MMU-4615885">
    <property type="pathway name" value="SUMOylation of DNA replication proteins"/>
</dbReference>
<dbReference type="Reactome" id="R-MMU-5578749">
    <property type="pathway name" value="Transcriptional regulation by small RNAs"/>
</dbReference>
<dbReference type="BioGRID-ORCS" id="269113">
    <property type="hits" value="19 hits in 77 CRISPR screens"/>
</dbReference>
<dbReference type="ChiTaRS" id="Nup54">
    <property type="organism name" value="mouse"/>
</dbReference>
<dbReference type="PRO" id="PR:Q8BTS4"/>
<dbReference type="Proteomes" id="UP000000589">
    <property type="component" value="Chromosome 5"/>
</dbReference>
<dbReference type="RNAct" id="Q8BTS4">
    <property type="molecule type" value="protein"/>
</dbReference>
<dbReference type="Bgee" id="ENSMUSG00000034826">
    <property type="expression patterns" value="Expressed in epiblast (generic) and 232 other cell types or tissues"/>
</dbReference>
<dbReference type="ExpressionAtlas" id="Q8BTS4">
    <property type="expression patterns" value="baseline and differential"/>
</dbReference>
<dbReference type="GO" id="GO:0005635">
    <property type="term" value="C:nuclear envelope"/>
    <property type="evidence" value="ECO:0000266"/>
    <property type="project" value="ComplexPortal"/>
</dbReference>
<dbReference type="GO" id="GO:0031965">
    <property type="term" value="C:nuclear membrane"/>
    <property type="evidence" value="ECO:0007669"/>
    <property type="project" value="UniProtKB-SubCell"/>
</dbReference>
<dbReference type="GO" id="GO:0005643">
    <property type="term" value="C:nuclear pore"/>
    <property type="evidence" value="ECO:0000303"/>
    <property type="project" value="ComplexPortal"/>
</dbReference>
<dbReference type="GO" id="GO:0051028">
    <property type="term" value="P:mRNA transport"/>
    <property type="evidence" value="ECO:0007669"/>
    <property type="project" value="UniProtKB-KW"/>
</dbReference>
<dbReference type="GO" id="GO:0006913">
    <property type="term" value="P:nucleocytoplasmic transport"/>
    <property type="evidence" value="ECO:0000303"/>
    <property type="project" value="ComplexPortal"/>
</dbReference>
<dbReference type="GO" id="GO:0015031">
    <property type="term" value="P:protein transport"/>
    <property type="evidence" value="ECO:0007669"/>
    <property type="project" value="UniProtKB-KW"/>
</dbReference>
<dbReference type="FunFam" id="1.20.5.490:FF:000003">
    <property type="entry name" value="nucleoporin p54 isoform X1"/>
    <property type="match status" value="1"/>
</dbReference>
<dbReference type="FunFam" id="1.20.5.170:FF:000034">
    <property type="entry name" value="Nucleoporin P54, putative"/>
    <property type="match status" value="1"/>
</dbReference>
<dbReference type="Gene3D" id="1.20.5.170">
    <property type="match status" value="1"/>
</dbReference>
<dbReference type="Gene3D" id="1.20.5.490">
    <property type="entry name" value="Single helix bin"/>
    <property type="match status" value="1"/>
</dbReference>
<dbReference type="InterPro" id="IPR024864">
    <property type="entry name" value="Nup54/Nup57/Nup44"/>
</dbReference>
<dbReference type="InterPro" id="IPR025712">
    <property type="entry name" value="Nup54_alpha-helical_dom"/>
</dbReference>
<dbReference type="InterPro" id="IPR040985">
    <property type="entry name" value="Nup54_C"/>
</dbReference>
<dbReference type="PANTHER" id="PTHR13000">
    <property type="entry name" value="NUCLEOPORIN P54"/>
    <property type="match status" value="1"/>
</dbReference>
<dbReference type="PANTHER" id="PTHR13000:SF0">
    <property type="entry name" value="NUCLEOPORIN P54"/>
    <property type="match status" value="1"/>
</dbReference>
<dbReference type="Pfam" id="PF13874">
    <property type="entry name" value="Nup54"/>
    <property type="match status" value="1"/>
</dbReference>
<dbReference type="Pfam" id="PF18437">
    <property type="entry name" value="Nup54_C"/>
    <property type="match status" value="1"/>
</dbReference>